<dbReference type="EMBL" id="AM902716">
    <property type="protein sequence ID" value="CAP41223.1"/>
    <property type="molecule type" value="Genomic_DNA"/>
</dbReference>
<dbReference type="SMR" id="A9I8B8"/>
<dbReference type="STRING" id="94624.Bpet0891"/>
<dbReference type="KEGG" id="bpt:Bpet0891"/>
<dbReference type="eggNOG" id="COG0851">
    <property type="taxonomic scope" value="Bacteria"/>
</dbReference>
<dbReference type="Proteomes" id="UP000001225">
    <property type="component" value="Chromosome"/>
</dbReference>
<dbReference type="GO" id="GO:0051301">
    <property type="term" value="P:cell division"/>
    <property type="evidence" value="ECO:0007669"/>
    <property type="project" value="UniProtKB-KW"/>
</dbReference>
<dbReference type="GO" id="GO:0032955">
    <property type="term" value="P:regulation of division septum assembly"/>
    <property type="evidence" value="ECO:0007669"/>
    <property type="project" value="InterPro"/>
</dbReference>
<dbReference type="FunFam" id="3.30.1070.10:FF:000001">
    <property type="entry name" value="Cell division topological specificity factor"/>
    <property type="match status" value="1"/>
</dbReference>
<dbReference type="Gene3D" id="3.30.1070.10">
    <property type="entry name" value="Cell division topological specificity factor MinE"/>
    <property type="match status" value="1"/>
</dbReference>
<dbReference type="HAMAP" id="MF_00262">
    <property type="entry name" value="MinE"/>
    <property type="match status" value="1"/>
</dbReference>
<dbReference type="InterPro" id="IPR005527">
    <property type="entry name" value="MinE"/>
</dbReference>
<dbReference type="InterPro" id="IPR036707">
    <property type="entry name" value="MinE_sf"/>
</dbReference>
<dbReference type="NCBIfam" id="TIGR01215">
    <property type="entry name" value="minE"/>
    <property type="match status" value="1"/>
</dbReference>
<dbReference type="NCBIfam" id="NF001422">
    <property type="entry name" value="PRK00296.1"/>
    <property type="match status" value="1"/>
</dbReference>
<dbReference type="NCBIfam" id="NF010595">
    <property type="entry name" value="PRK13989.1"/>
    <property type="match status" value="1"/>
</dbReference>
<dbReference type="Pfam" id="PF03776">
    <property type="entry name" value="MinE"/>
    <property type="match status" value="1"/>
</dbReference>
<dbReference type="SUPFAM" id="SSF55229">
    <property type="entry name" value="Cell division protein MinE topological specificity domain"/>
    <property type="match status" value="1"/>
</dbReference>
<feature type="chain" id="PRO_1000114202" description="Cell division topological specificity factor">
    <location>
        <begin position="1"/>
        <end position="86"/>
    </location>
</feature>
<evidence type="ECO:0000255" key="1">
    <source>
        <dbReference type="HAMAP-Rule" id="MF_00262"/>
    </source>
</evidence>
<organism>
    <name type="scientific">Bordetella petrii (strain ATCC BAA-461 / DSM 12804 / CCUG 43448)</name>
    <dbReference type="NCBI Taxonomy" id="340100"/>
    <lineage>
        <taxon>Bacteria</taxon>
        <taxon>Pseudomonadati</taxon>
        <taxon>Pseudomonadota</taxon>
        <taxon>Betaproteobacteria</taxon>
        <taxon>Burkholderiales</taxon>
        <taxon>Alcaligenaceae</taxon>
        <taxon>Bordetella</taxon>
    </lineage>
</organism>
<comment type="function">
    <text evidence="1">Prevents the cell division inhibition by proteins MinC and MinD at internal division sites while permitting inhibition at polar sites. This ensures cell division at the proper site by restricting the formation of a division septum at the midpoint of the long axis of the cell.</text>
</comment>
<comment type="similarity">
    <text evidence="1">Belongs to the MinE family.</text>
</comment>
<proteinExistence type="inferred from homology"/>
<reference key="1">
    <citation type="journal article" date="2008" name="BMC Genomics">
        <title>The missing link: Bordetella petrii is endowed with both the metabolic versatility of environmental bacteria and virulence traits of pathogenic Bordetellae.</title>
        <authorList>
            <person name="Gross R."/>
            <person name="Guzman C.A."/>
            <person name="Sebaihia M."/>
            <person name="Martin dos Santos V.A.P."/>
            <person name="Pieper D.H."/>
            <person name="Koebnik R."/>
            <person name="Lechner M."/>
            <person name="Bartels D."/>
            <person name="Buhrmester J."/>
            <person name="Choudhuri J.V."/>
            <person name="Ebensen T."/>
            <person name="Gaigalat L."/>
            <person name="Herrmann S."/>
            <person name="Khachane A.N."/>
            <person name="Larisch C."/>
            <person name="Link S."/>
            <person name="Linke B."/>
            <person name="Meyer F."/>
            <person name="Mormann S."/>
            <person name="Nakunst D."/>
            <person name="Rueckert C."/>
            <person name="Schneiker-Bekel S."/>
            <person name="Schulze K."/>
            <person name="Voerholter F.-J."/>
            <person name="Yevsa T."/>
            <person name="Engle J.T."/>
            <person name="Goldman W.E."/>
            <person name="Puehler A."/>
            <person name="Goebel U.B."/>
            <person name="Goesmann A."/>
            <person name="Bloecker H."/>
            <person name="Kaiser O."/>
            <person name="Martinez-Arias R."/>
        </authorList>
    </citation>
    <scope>NUCLEOTIDE SEQUENCE [LARGE SCALE GENOMIC DNA]</scope>
    <source>
        <strain>ATCC BAA-461 / DSM 12804 / CCUG 43448</strain>
    </source>
</reference>
<accession>A9I8B8</accession>
<name>MINE_BORPD</name>
<protein>
    <recommendedName>
        <fullName evidence="1">Cell division topological specificity factor</fullName>
    </recommendedName>
</protein>
<gene>
    <name evidence="1" type="primary">minE</name>
    <name type="ordered locus">Bpet0891</name>
</gene>
<sequence>MSFLSFLLGQKKTSAVVAKERLQIILAHERSGRGASPDYLPQLQQELVAVISKYVNINPDDIKVHLERQDTLEVLEVKIEMPQKEA</sequence>
<keyword id="KW-0131">Cell cycle</keyword>
<keyword id="KW-0132">Cell division</keyword>